<reference key="1">
    <citation type="submission" date="2007-09" db="EMBL/GenBank/DDBJ databases">
        <title>Complete sequence of chromosome of Serratia proteamaculans 568.</title>
        <authorList>
            <consortium name="US DOE Joint Genome Institute"/>
            <person name="Copeland A."/>
            <person name="Lucas S."/>
            <person name="Lapidus A."/>
            <person name="Barry K."/>
            <person name="Glavina del Rio T."/>
            <person name="Dalin E."/>
            <person name="Tice H."/>
            <person name="Pitluck S."/>
            <person name="Chain P."/>
            <person name="Malfatti S."/>
            <person name="Shin M."/>
            <person name="Vergez L."/>
            <person name="Schmutz J."/>
            <person name="Larimer F."/>
            <person name="Land M."/>
            <person name="Hauser L."/>
            <person name="Kyrpides N."/>
            <person name="Kim E."/>
            <person name="Taghavi S."/>
            <person name="Newman L."/>
            <person name="Vangronsveld J."/>
            <person name="van der Lelie D."/>
            <person name="Richardson P."/>
        </authorList>
    </citation>
    <scope>NUCLEOTIDE SEQUENCE [LARGE SCALE GENOMIC DNA]</scope>
    <source>
        <strain>568</strain>
    </source>
</reference>
<name>PSUG_SERP5</name>
<keyword id="KW-0326">Glycosidase</keyword>
<keyword id="KW-0378">Hydrolase</keyword>
<keyword id="KW-0456">Lyase</keyword>
<keyword id="KW-0464">Manganese</keyword>
<keyword id="KW-0479">Metal-binding</keyword>
<sequence>MMQANLLPLVIHPEVKAALESRHAVVALESNVITHGLNYPANVETALAVEAAVRRSGAVPATIGICDGEILVGMHREQIERFATTPGIAKVSSNNLPFVLAQKSMGATTVASSLMLAELAGIGFFASAGIGGVHRGGEDSMDISSDLIQFTRTNVTVVCAGAKNILDIGRTLEFLETQCVPVVTYQTDDFPAFYCRSSGYRSPQRLDSLEAIAQAIDINRALPGSAAMVVAAPTKPEDAIDSRDVQAAIQAAIENAAAKGVTGSQVTKFIMKAVEQATHGRSAMANAAVLVNTAEIAGQLAMVYHRPR</sequence>
<comment type="function">
    <text evidence="1">Catalyzes the reversible cleavage of pseudouridine 5'-phosphate (PsiMP) to ribose 5-phosphate and uracil. Functions biologically in the cleavage direction, as part of a pseudouridine degradation pathway.</text>
</comment>
<comment type="catalytic activity">
    <reaction evidence="1">
        <text>D-ribose 5-phosphate + uracil = psi-UMP + H2O</text>
        <dbReference type="Rhea" id="RHEA:18337"/>
        <dbReference type="ChEBI" id="CHEBI:15377"/>
        <dbReference type="ChEBI" id="CHEBI:17568"/>
        <dbReference type="ChEBI" id="CHEBI:58380"/>
        <dbReference type="ChEBI" id="CHEBI:78346"/>
        <dbReference type="EC" id="4.2.1.70"/>
    </reaction>
</comment>
<comment type="cofactor">
    <cofactor evidence="1">
        <name>Mn(2+)</name>
        <dbReference type="ChEBI" id="CHEBI:29035"/>
    </cofactor>
    <text evidence="1">Binds 1 Mn(2+) ion per subunit.</text>
</comment>
<comment type="subunit">
    <text evidence="1">Homotrimer.</text>
</comment>
<comment type="similarity">
    <text evidence="1">Belongs to the pseudouridine-5'-phosphate glycosidase family.</text>
</comment>
<proteinExistence type="inferred from homology"/>
<gene>
    <name evidence="1" type="primary">psuG</name>
    <name type="ordered locus">Spro_1699</name>
</gene>
<feature type="chain" id="PRO_0000390547" description="Pseudouridine-5'-phosphate glycosidase">
    <location>
        <begin position="1"/>
        <end position="308"/>
    </location>
</feature>
<feature type="active site" description="Proton donor" evidence="1">
    <location>
        <position position="29"/>
    </location>
</feature>
<feature type="active site" description="Nucleophile" evidence="1">
    <location>
        <position position="163"/>
    </location>
</feature>
<feature type="binding site" evidence="1">
    <location>
        <position position="90"/>
    </location>
    <ligand>
        <name>substrate</name>
    </ligand>
</feature>
<feature type="binding site" evidence="1">
    <location>
        <position position="110"/>
    </location>
    <ligand>
        <name>substrate</name>
    </ligand>
</feature>
<feature type="binding site" evidence="1">
    <location>
        <position position="142"/>
    </location>
    <ligand>
        <name>Mn(2+)</name>
        <dbReference type="ChEBI" id="CHEBI:29035"/>
    </ligand>
</feature>
<feature type="binding site" evidence="1">
    <location>
        <begin position="144"/>
        <end position="146"/>
    </location>
    <ligand>
        <name>substrate</name>
    </ligand>
</feature>
<dbReference type="EC" id="4.2.1.70" evidence="1"/>
<dbReference type="EMBL" id="CP000826">
    <property type="protein sequence ID" value="ABV40803.1"/>
    <property type="molecule type" value="Genomic_DNA"/>
</dbReference>
<dbReference type="SMR" id="A8GCG3"/>
<dbReference type="STRING" id="399741.Spro_1699"/>
<dbReference type="KEGG" id="spe:Spro_1699"/>
<dbReference type="eggNOG" id="COG2313">
    <property type="taxonomic scope" value="Bacteria"/>
</dbReference>
<dbReference type="HOGENOM" id="CLU_012201_0_1_6"/>
<dbReference type="OrthoDB" id="9805870at2"/>
<dbReference type="GO" id="GO:0005737">
    <property type="term" value="C:cytoplasm"/>
    <property type="evidence" value="ECO:0007669"/>
    <property type="project" value="TreeGrafter"/>
</dbReference>
<dbReference type="GO" id="GO:0016798">
    <property type="term" value="F:hydrolase activity, acting on glycosyl bonds"/>
    <property type="evidence" value="ECO:0007669"/>
    <property type="project" value="UniProtKB-KW"/>
</dbReference>
<dbReference type="GO" id="GO:0046872">
    <property type="term" value="F:metal ion binding"/>
    <property type="evidence" value="ECO:0007669"/>
    <property type="project" value="UniProtKB-KW"/>
</dbReference>
<dbReference type="GO" id="GO:0004730">
    <property type="term" value="F:pseudouridylate synthase activity"/>
    <property type="evidence" value="ECO:0007669"/>
    <property type="project" value="UniProtKB-UniRule"/>
</dbReference>
<dbReference type="GO" id="GO:0046113">
    <property type="term" value="P:nucleobase catabolic process"/>
    <property type="evidence" value="ECO:0007669"/>
    <property type="project" value="UniProtKB-UniRule"/>
</dbReference>
<dbReference type="Gene3D" id="3.40.1790.10">
    <property type="entry name" value="Indigoidine synthase domain"/>
    <property type="match status" value="1"/>
</dbReference>
<dbReference type="HAMAP" id="MF_01876">
    <property type="entry name" value="PsiMP_glycosidase"/>
    <property type="match status" value="1"/>
</dbReference>
<dbReference type="InterPro" id="IPR022830">
    <property type="entry name" value="Indigdn_synthA-like"/>
</dbReference>
<dbReference type="InterPro" id="IPR007342">
    <property type="entry name" value="PsuG"/>
</dbReference>
<dbReference type="PANTHER" id="PTHR42909:SF1">
    <property type="entry name" value="CARBOHYDRATE KINASE PFKB DOMAIN-CONTAINING PROTEIN"/>
    <property type="match status" value="1"/>
</dbReference>
<dbReference type="PANTHER" id="PTHR42909">
    <property type="entry name" value="ZGC:136858"/>
    <property type="match status" value="1"/>
</dbReference>
<dbReference type="Pfam" id="PF04227">
    <property type="entry name" value="Indigoidine_A"/>
    <property type="match status" value="1"/>
</dbReference>
<dbReference type="SUPFAM" id="SSF110581">
    <property type="entry name" value="Indigoidine synthase A-like"/>
    <property type="match status" value="1"/>
</dbReference>
<accession>A8GCG3</accession>
<organism>
    <name type="scientific">Serratia proteamaculans (strain 568)</name>
    <dbReference type="NCBI Taxonomy" id="399741"/>
    <lineage>
        <taxon>Bacteria</taxon>
        <taxon>Pseudomonadati</taxon>
        <taxon>Pseudomonadota</taxon>
        <taxon>Gammaproteobacteria</taxon>
        <taxon>Enterobacterales</taxon>
        <taxon>Yersiniaceae</taxon>
        <taxon>Serratia</taxon>
    </lineage>
</organism>
<protein>
    <recommendedName>
        <fullName evidence="1">Pseudouridine-5'-phosphate glycosidase</fullName>
        <shortName evidence="1">PsiMP glycosidase</shortName>
        <ecNumber evidence="1">4.2.1.70</ecNumber>
    </recommendedName>
</protein>
<evidence type="ECO:0000255" key="1">
    <source>
        <dbReference type="HAMAP-Rule" id="MF_01876"/>
    </source>
</evidence>